<accession>B8GVG0</accession>
<dbReference type="EMBL" id="CP001340">
    <property type="protein sequence ID" value="ACL95130.1"/>
    <property type="molecule type" value="Genomic_DNA"/>
</dbReference>
<dbReference type="RefSeq" id="WP_010919467.1">
    <property type="nucleotide sequence ID" value="NC_011916.1"/>
</dbReference>
<dbReference type="RefSeq" id="YP_002517038.1">
    <property type="nucleotide sequence ID" value="NC_011916.1"/>
</dbReference>
<dbReference type="SMR" id="B8GVG0"/>
<dbReference type="GeneID" id="7331725"/>
<dbReference type="KEGG" id="ccs:CCNA_01665"/>
<dbReference type="PATRIC" id="fig|565050.3.peg.1639"/>
<dbReference type="HOGENOM" id="CLU_077094_2_0_5"/>
<dbReference type="OrthoDB" id="9788285at2"/>
<dbReference type="PhylomeDB" id="B8GVG0"/>
<dbReference type="Proteomes" id="UP000001364">
    <property type="component" value="Chromosome"/>
</dbReference>
<dbReference type="GO" id="GO:0005886">
    <property type="term" value="C:plasma membrane"/>
    <property type="evidence" value="ECO:0007669"/>
    <property type="project" value="UniProtKB-SubCell"/>
</dbReference>
<dbReference type="GO" id="GO:0005524">
    <property type="term" value="F:ATP binding"/>
    <property type="evidence" value="ECO:0007669"/>
    <property type="project" value="UniProtKB-UniRule"/>
</dbReference>
<dbReference type="GO" id="GO:0008556">
    <property type="term" value="F:P-type potassium transmembrane transporter activity"/>
    <property type="evidence" value="ECO:0007669"/>
    <property type="project" value="InterPro"/>
</dbReference>
<dbReference type="HAMAP" id="MF_00276">
    <property type="entry name" value="KdpC"/>
    <property type="match status" value="1"/>
</dbReference>
<dbReference type="InterPro" id="IPR003820">
    <property type="entry name" value="KdpC"/>
</dbReference>
<dbReference type="NCBIfam" id="TIGR00681">
    <property type="entry name" value="kdpC"/>
    <property type="match status" value="1"/>
</dbReference>
<dbReference type="NCBIfam" id="NF001454">
    <property type="entry name" value="PRK00315.1"/>
    <property type="match status" value="1"/>
</dbReference>
<dbReference type="PANTHER" id="PTHR30042">
    <property type="entry name" value="POTASSIUM-TRANSPORTING ATPASE C CHAIN"/>
    <property type="match status" value="1"/>
</dbReference>
<dbReference type="PANTHER" id="PTHR30042:SF2">
    <property type="entry name" value="POTASSIUM-TRANSPORTING ATPASE KDPC SUBUNIT"/>
    <property type="match status" value="1"/>
</dbReference>
<dbReference type="Pfam" id="PF02669">
    <property type="entry name" value="KdpC"/>
    <property type="match status" value="1"/>
</dbReference>
<dbReference type="PIRSF" id="PIRSF001296">
    <property type="entry name" value="K_ATPase_KdpC"/>
    <property type="match status" value="1"/>
</dbReference>
<gene>
    <name evidence="1" type="primary">kdpC</name>
    <name type="ordered locus">CCNA_01665</name>
</gene>
<organism>
    <name type="scientific">Caulobacter vibrioides (strain NA1000 / CB15N)</name>
    <name type="common">Caulobacter crescentus</name>
    <dbReference type="NCBI Taxonomy" id="565050"/>
    <lineage>
        <taxon>Bacteria</taxon>
        <taxon>Pseudomonadati</taxon>
        <taxon>Pseudomonadota</taxon>
        <taxon>Alphaproteobacteria</taxon>
        <taxon>Caulobacterales</taxon>
        <taxon>Caulobacteraceae</taxon>
        <taxon>Caulobacter</taxon>
    </lineage>
</organism>
<name>KDPC_CAUVN</name>
<reference key="1">
    <citation type="journal article" date="2010" name="J. Bacteriol.">
        <title>The genetic basis of laboratory adaptation in Caulobacter crescentus.</title>
        <authorList>
            <person name="Marks M.E."/>
            <person name="Castro-Rojas C.M."/>
            <person name="Teiling C."/>
            <person name="Du L."/>
            <person name="Kapatral V."/>
            <person name="Walunas T.L."/>
            <person name="Crosson S."/>
        </authorList>
    </citation>
    <scope>NUCLEOTIDE SEQUENCE [LARGE SCALE GENOMIC DNA]</scope>
    <source>
        <strain>NA1000 / CB15N</strain>
    </source>
</reference>
<comment type="function">
    <text evidence="1">Part of the high-affinity ATP-driven potassium transport (or Kdp) system, which catalyzes the hydrolysis of ATP coupled with the electrogenic transport of potassium into the cytoplasm. This subunit acts as a catalytic chaperone that increases the ATP-binding affinity of the ATP-hydrolyzing subunit KdpB by the formation of a transient KdpB/KdpC/ATP ternary complex.</text>
</comment>
<comment type="subunit">
    <text evidence="1">The system is composed of three essential subunits: KdpA, KdpB and KdpC.</text>
</comment>
<comment type="subcellular location">
    <subcellularLocation>
        <location evidence="1">Cell inner membrane</location>
        <topology evidence="1">Single-pass membrane protein</topology>
    </subcellularLocation>
</comment>
<comment type="similarity">
    <text evidence="1">Belongs to the KdpC family.</text>
</comment>
<sequence length="197" mass="20149">MLSHLRPALVSMGLFTVLLGLAYPLAVTGVAQAAFPNQANGSLIRDADGKVVGSALIGQVFAKPEYFHGRPSAAGAGYDASASSGSNMGPLNETLIARLKTDAAALRAENPGVAIPADAVTTSGSGLDPDISPANARFQAPRVAGARGVPEKDVTALIDAQVQQPLLGFIGQPRVNVLALNRALDARYPPLASQKDG</sequence>
<evidence type="ECO:0000255" key="1">
    <source>
        <dbReference type="HAMAP-Rule" id="MF_00276"/>
    </source>
</evidence>
<proteinExistence type="inferred from homology"/>
<keyword id="KW-0067">ATP-binding</keyword>
<keyword id="KW-0997">Cell inner membrane</keyword>
<keyword id="KW-1003">Cell membrane</keyword>
<keyword id="KW-0406">Ion transport</keyword>
<keyword id="KW-0472">Membrane</keyword>
<keyword id="KW-0547">Nucleotide-binding</keyword>
<keyword id="KW-0630">Potassium</keyword>
<keyword id="KW-0633">Potassium transport</keyword>
<keyword id="KW-1185">Reference proteome</keyword>
<keyword id="KW-0812">Transmembrane</keyword>
<keyword id="KW-1133">Transmembrane helix</keyword>
<keyword id="KW-0813">Transport</keyword>
<protein>
    <recommendedName>
        <fullName evidence="1">Potassium-transporting ATPase KdpC subunit</fullName>
    </recommendedName>
    <alternativeName>
        <fullName evidence="1">ATP phosphohydrolase [potassium-transporting] C chain</fullName>
    </alternativeName>
    <alternativeName>
        <fullName evidence="1">Potassium-binding and translocating subunit C</fullName>
    </alternativeName>
    <alternativeName>
        <fullName evidence="1">Potassium-translocating ATPase C chain</fullName>
    </alternativeName>
</protein>
<feature type="chain" id="PRO_1000132514" description="Potassium-transporting ATPase KdpC subunit">
    <location>
        <begin position="1"/>
        <end position="197"/>
    </location>
</feature>
<feature type="transmembrane region" description="Helical" evidence="1">
    <location>
        <begin position="7"/>
        <end position="27"/>
    </location>
</feature>